<feature type="chain" id="PRO_5000286943" description="ATP-dependent zinc metalloprotease FtsH 2">
    <location>
        <begin position="1"/>
        <end position="630"/>
    </location>
</feature>
<feature type="topological domain" description="Cytoplasmic" evidence="1">
    <location>
        <begin position="1"/>
        <end position="8"/>
    </location>
</feature>
<feature type="transmembrane region" description="Helical" evidence="1">
    <location>
        <begin position="9"/>
        <end position="29"/>
    </location>
</feature>
<feature type="topological domain" description="Periplasmic" evidence="1">
    <location>
        <begin position="30"/>
        <end position="110"/>
    </location>
</feature>
<feature type="transmembrane region" description="Helical" evidence="1">
    <location>
        <begin position="111"/>
        <end position="131"/>
    </location>
</feature>
<feature type="topological domain" description="Cytoplasmic" evidence="1">
    <location>
        <begin position="132"/>
        <end position="630"/>
    </location>
</feature>
<feature type="active site" evidence="1">
    <location>
        <position position="426"/>
    </location>
</feature>
<feature type="binding site" evidence="1">
    <location>
        <begin position="203"/>
        <end position="210"/>
    </location>
    <ligand>
        <name>ATP</name>
        <dbReference type="ChEBI" id="CHEBI:30616"/>
    </ligand>
</feature>
<feature type="binding site" evidence="1">
    <location>
        <position position="425"/>
    </location>
    <ligand>
        <name>Zn(2+)</name>
        <dbReference type="ChEBI" id="CHEBI:29105"/>
        <note>catalytic</note>
    </ligand>
</feature>
<feature type="binding site" evidence="1">
    <location>
        <position position="429"/>
    </location>
    <ligand>
        <name>Zn(2+)</name>
        <dbReference type="ChEBI" id="CHEBI:29105"/>
        <note>catalytic</note>
    </ligand>
</feature>
<feature type="binding site" evidence="1">
    <location>
        <position position="502"/>
    </location>
    <ligand>
        <name>Zn(2+)</name>
        <dbReference type="ChEBI" id="CHEBI:29105"/>
        <note>catalytic</note>
    </ligand>
</feature>
<accession>A9BHD3</accession>
<proteinExistence type="inferred from homology"/>
<protein>
    <recommendedName>
        <fullName evidence="1">ATP-dependent zinc metalloprotease FtsH 2</fullName>
        <ecNumber evidence="1">3.4.24.-</ecNumber>
    </recommendedName>
</protein>
<comment type="function">
    <text evidence="1">Acts as a processive, ATP-dependent zinc metallopeptidase for both cytoplasmic and membrane proteins. Plays a role in the quality control of integral membrane proteins.</text>
</comment>
<comment type="cofactor">
    <cofactor evidence="1">
        <name>Zn(2+)</name>
        <dbReference type="ChEBI" id="CHEBI:29105"/>
    </cofactor>
    <text evidence="1">Binds 1 zinc ion per subunit.</text>
</comment>
<comment type="subunit">
    <text evidence="1">Homohexamer.</text>
</comment>
<comment type="subcellular location">
    <subcellularLocation>
        <location evidence="1">Cell inner membrane</location>
        <topology evidence="1">Multi-pass membrane protein</topology>
        <orientation evidence="1">Cytoplasmic side</orientation>
    </subcellularLocation>
</comment>
<comment type="similarity">
    <text evidence="1">In the central section; belongs to the AAA ATPase family.</text>
</comment>
<comment type="similarity">
    <text evidence="1">In the C-terminal section; belongs to the peptidase M41 family.</text>
</comment>
<dbReference type="EC" id="3.4.24.-" evidence="1"/>
<dbReference type="EMBL" id="CP000879">
    <property type="protein sequence ID" value="ABX31542.1"/>
    <property type="molecule type" value="Genomic_DNA"/>
</dbReference>
<dbReference type="SMR" id="A9BHD3"/>
<dbReference type="STRING" id="403833.Pmob_0818"/>
<dbReference type="MEROPS" id="M41.021"/>
<dbReference type="KEGG" id="pmo:Pmob_0818"/>
<dbReference type="eggNOG" id="COG0465">
    <property type="taxonomic scope" value="Bacteria"/>
</dbReference>
<dbReference type="HOGENOM" id="CLU_000688_16_2_0"/>
<dbReference type="OrthoDB" id="9809379at2"/>
<dbReference type="Proteomes" id="UP000000789">
    <property type="component" value="Chromosome"/>
</dbReference>
<dbReference type="GO" id="GO:0005886">
    <property type="term" value="C:plasma membrane"/>
    <property type="evidence" value="ECO:0007669"/>
    <property type="project" value="UniProtKB-SubCell"/>
</dbReference>
<dbReference type="GO" id="GO:0005524">
    <property type="term" value="F:ATP binding"/>
    <property type="evidence" value="ECO:0007669"/>
    <property type="project" value="UniProtKB-UniRule"/>
</dbReference>
<dbReference type="GO" id="GO:0016887">
    <property type="term" value="F:ATP hydrolysis activity"/>
    <property type="evidence" value="ECO:0007669"/>
    <property type="project" value="UniProtKB-UniRule"/>
</dbReference>
<dbReference type="GO" id="GO:0004176">
    <property type="term" value="F:ATP-dependent peptidase activity"/>
    <property type="evidence" value="ECO:0007669"/>
    <property type="project" value="InterPro"/>
</dbReference>
<dbReference type="GO" id="GO:0004222">
    <property type="term" value="F:metalloendopeptidase activity"/>
    <property type="evidence" value="ECO:0007669"/>
    <property type="project" value="InterPro"/>
</dbReference>
<dbReference type="GO" id="GO:0008270">
    <property type="term" value="F:zinc ion binding"/>
    <property type="evidence" value="ECO:0007669"/>
    <property type="project" value="UniProtKB-UniRule"/>
</dbReference>
<dbReference type="GO" id="GO:0030163">
    <property type="term" value="P:protein catabolic process"/>
    <property type="evidence" value="ECO:0007669"/>
    <property type="project" value="UniProtKB-UniRule"/>
</dbReference>
<dbReference type="GO" id="GO:0006508">
    <property type="term" value="P:proteolysis"/>
    <property type="evidence" value="ECO:0007669"/>
    <property type="project" value="UniProtKB-KW"/>
</dbReference>
<dbReference type="CDD" id="cd19501">
    <property type="entry name" value="RecA-like_FtsH"/>
    <property type="match status" value="1"/>
</dbReference>
<dbReference type="FunFam" id="1.10.8.60:FF:000001">
    <property type="entry name" value="ATP-dependent zinc metalloprotease FtsH"/>
    <property type="match status" value="1"/>
</dbReference>
<dbReference type="FunFam" id="1.20.58.760:FF:000001">
    <property type="entry name" value="ATP-dependent zinc metalloprotease FtsH"/>
    <property type="match status" value="1"/>
</dbReference>
<dbReference type="FunFam" id="3.40.50.300:FF:000001">
    <property type="entry name" value="ATP-dependent zinc metalloprotease FtsH"/>
    <property type="match status" value="1"/>
</dbReference>
<dbReference type="Gene3D" id="1.10.8.60">
    <property type="match status" value="1"/>
</dbReference>
<dbReference type="Gene3D" id="3.30.720.210">
    <property type="match status" value="1"/>
</dbReference>
<dbReference type="Gene3D" id="3.40.50.300">
    <property type="entry name" value="P-loop containing nucleotide triphosphate hydrolases"/>
    <property type="match status" value="1"/>
</dbReference>
<dbReference type="Gene3D" id="1.20.58.760">
    <property type="entry name" value="Peptidase M41"/>
    <property type="match status" value="1"/>
</dbReference>
<dbReference type="HAMAP" id="MF_01458">
    <property type="entry name" value="FtsH"/>
    <property type="match status" value="1"/>
</dbReference>
<dbReference type="InterPro" id="IPR003593">
    <property type="entry name" value="AAA+_ATPase"/>
</dbReference>
<dbReference type="InterPro" id="IPR041569">
    <property type="entry name" value="AAA_lid_3"/>
</dbReference>
<dbReference type="InterPro" id="IPR003959">
    <property type="entry name" value="ATPase_AAA_core"/>
</dbReference>
<dbReference type="InterPro" id="IPR003960">
    <property type="entry name" value="ATPase_AAA_CS"/>
</dbReference>
<dbReference type="InterPro" id="IPR005936">
    <property type="entry name" value="FtsH"/>
</dbReference>
<dbReference type="InterPro" id="IPR027417">
    <property type="entry name" value="P-loop_NTPase"/>
</dbReference>
<dbReference type="InterPro" id="IPR011546">
    <property type="entry name" value="Pept_M41_FtsH_extracell"/>
</dbReference>
<dbReference type="InterPro" id="IPR000642">
    <property type="entry name" value="Peptidase_M41"/>
</dbReference>
<dbReference type="InterPro" id="IPR037219">
    <property type="entry name" value="Peptidase_M41-like"/>
</dbReference>
<dbReference type="NCBIfam" id="TIGR01241">
    <property type="entry name" value="FtsH_fam"/>
    <property type="match status" value="1"/>
</dbReference>
<dbReference type="PANTHER" id="PTHR23076:SF97">
    <property type="entry name" value="ATP-DEPENDENT ZINC METALLOPROTEASE YME1L1"/>
    <property type="match status" value="1"/>
</dbReference>
<dbReference type="PANTHER" id="PTHR23076">
    <property type="entry name" value="METALLOPROTEASE M41 FTSH"/>
    <property type="match status" value="1"/>
</dbReference>
<dbReference type="Pfam" id="PF00004">
    <property type="entry name" value="AAA"/>
    <property type="match status" value="1"/>
</dbReference>
<dbReference type="Pfam" id="PF17862">
    <property type="entry name" value="AAA_lid_3"/>
    <property type="match status" value="1"/>
</dbReference>
<dbReference type="Pfam" id="PF06480">
    <property type="entry name" value="FtsH_ext"/>
    <property type="match status" value="1"/>
</dbReference>
<dbReference type="Pfam" id="PF01434">
    <property type="entry name" value="Peptidase_M41"/>
    <property type="match status" value="1"/>
</dbReference>
<dbReference type="SMART" id="SM00382">
    <property type="entry name" value="AAA"/>
    <property type="match status" value="1"/>
</dbReference>
<dbReference type="SUPFAM" id="SSF140990">
    <property type="entry name" value="FtsH protease domain-like"/>
    <property type="match status" value="1"/>
</dbReference>
<dbReference type="SUPFAM" id="SSF52540">
    <property type="entry name" value="P-loop containing nucleoside triphosphate hydrolases"/>
    <property type="match status" value="1"/>
</dbReference>
<dbReference type="PROSITE" id="PS00674">
    <property type="entry name" value="AAA"/>
    <property type="match status" value="1"/>
</dbReference>
<gene>
    <name evidence="1" type="primary">ftsH2</name>
    <name type="ordered locus">Pmob_0818</name>
</gene>
<reference key="1">
    <citation type="submission" date="2007-11" db="EMBL/GenBank/DDBJ databases">
        <title>Complete sequence of Petroga mobilis SJ95.</title>
        <authorList>
            <consortium name="US DOE Joint Genome Institute"/>
            <person name="Copeland A."/>
            <person name="Lucas S."/>
            <person name="Lapidus A."/>
            <person name="Barry K."/>
            <person name="Glavina del Rio T."/>
            <person name="Dalin E."/>
            <person name="Tice H."/>
            <person name="Pitluck S."/>
            <person name="Meincke L."/>
            <person name="Brettin T."/>
            <person name="Bruce D."/>
            <person name="Detter J.C."/>
            <person name="Han C."/>
            <person name="Kuske C.R."/>
            <person name="Schmutz J."/>
            <person name="Larimer F."/>
            <person name="Land M."/>
            <person name="Hauser L."/>
            <person name="Kyrpides N."/>
            <person name="Mikhailova N."/>
            <person name="Noll K."/>
            <person name="Richardson P."/>
        </authorList>
    </citation>
    <scope>NUCLEOTIDE SEQUENCE [LARGE SCALE GENOMIC DNA]</scope>
    <source>
        <strain>DSM 10674 / SJ95</strain>
    </source>
</reference>
<keyword id="KW-0067">ATP-binding</keyword>
<keyword id="KW-0997">Cell inner membrane</keyword>
<keyword id="KW-1003">Cell membrane</keyword>
<keyword id="KW-0378">Hydrolase</keyword>
<keyword id="KW-0472">Membrane</keyword>
<keyword id="KW-0479">Metal-binding</keyword>
<keyword id="KW-0482">Metalloprotease</keyword>
<keyword id="KW-0547">Nucleotide-binding</keyword>
<keyword id="KW-0645">Protease</keyword>
<keyword id="KW-0812">Transmembrane</keyword>
<keyword id="KW-1133">Transmembrane helix</keyword>
<keyword id="KW-0862">Zinc</keyword>
<organism>
    <name type="scientific">Petrotoga mobilis (strain DSM 10674 / SJ95)</name>
    <dbReference type="NCBI Taxonomy" id="403833"/>
    <lineage>
        <taxon>Bacteria</taxon>
        <taxon>Thermotogati</taxon>
        <taxon>Thermotogota</taxon>
        <taxon>Thermotogae</taxon>
        <taxon>Petrotogales</taxon>
        <taxon>Petrotogaceae</taxon>
        <taxon>Petrotoga</taxon>
    </lineage>
</organism>
<sequence>MNNNPNRRGSLIGPLFIYFILAMLIFMSISQLNTSNITEISYTDLVNLINQDTIISLQIDTSGLIQAKAKNGQLFQVYAPTLLMDQAYVRALANDGIKVEYIQNTGASWWVTMLIYMLPLIILMFFWFWMFRRSGTGEGIPGANYRRNPARRYDSKRNKITFNDVAGIDEVKEELEDIVNFLKDPKNFSALGAKMPKGVLLSGPPGTGKTLVARAVAGEADVPFYFMSGSDFVELFVGVGAARVRDLFKEAKENSPAIIFIDELDAVGRQRGTGLGGGHDEREQTLNALLVEMDGFDPREGIVVMAATNRPDILDKALLRPGRFDKKIFLDVPDLRAREEIIKIHLRGKRIADDIDVKSLAQSTPGFVGADLENMVNEAALLAARDNRDHITNDDFQEAIERVIVGPARKSRKITPKEKKVITYHELGHAVLGYLLPYADPVHKITIVPRGQAALGYTMQLPSEDRFLITEPEIKDKIVGMLGGRAAEEIVFNEITTGAGNDLKRATELVREMVAQLGMSEKIGPIAWGEEEGEIFLGREITRMKNFSQETAKEIDSEIKNFILSSYEKAKNLLSENRKRLDLLAIYLYNKENISGKEFKKMMEMDIEELNDYVLKDKDVKETNLFVSYA</sequence>
<name>FTSH2_PETMO</name>
<evidence type="ECO:0000255" key="1">
    <source>
        <dbReference type="HAMAP-Rule" id="MF_01458"/>
    </source>
</evidence>